<evidence type="ECO:0000256" key="1">
    <source>
        <dbReference type="SAM" id="MobiDB-lite"/>
    </source>
</evidence>
<evidence type="ECO:0000269" key="2">
    <source>
    </source>
</evidence>
<evidence type="ECO:0000269" key="3">
    <source>
    </source>
</evidence>
<evidence type="ECO:0000269" key="4">
    <source>
    </source>
</evidence>
<evidence type="ECO:0000269" key="5">
    <source>
    </source>
</evidence>
<evidence type="ECO:0000269" key="6">
    <source>
    </source>
</evidence>
<evidence type="ECO:0000305" key="7"/>
<evidence type="ECO:0007744" key="8">
    <source>
    </source>
</evidence>
<evidence type="ECO:0007829" key="9">
    <source>
        <dbReference type="PDB" id="6WJV"/>
    </source>
</evidence>
<evidence type="ECO:0007829" key="10">
    <source>
        <dbReference type="PDB" id="7PMK"/>
    </source>
</evidence>
<name>DPB2_YEAST</name>
<dbReference type="EMBL" id="M61710">
    <property type="protein sequence ID" value="AAA34576.1"/>
    <property type="status" value="ALT_INIT"/>
    <property type="molecule type" value="Genomic_DNA"/>
</dbReference>
<dbReference type="EMBL" id="U25842">
    <property type="protein sequence ID" value="AAB68109.1"/>
    <property type="status" value="ALT_INIT"/>
    <property type="molecule type" value="Genomic_DNA"/>
</dbReference>
<dbReference type="EMBL" id="BK006949">
    <property type="protein sequence ID" value="DAA11592.1"/>
    <property type="molecule type" value="Genomic_DNA"/>
</dbReference>
<dbReference type="PIR" id="S59833">
    <property type="entry name" value="S59833"/>
</dbReference>
<dbReference type="RefSeq" id="NP_015501.2">
    <property type="nucleotide sequence ID" value="NM_001184272.1"/>
</dbReference>
<dbReference type="PDB" id="6HV8">
    <property type="method" value="EM"/>
    <property type="resolution" value="4.40 A"/>
    <property type="chains" value="B=1-689"/>
</dbReference>
<dbReference type="PDB" id="6HV9">
    <property type="method" value="EM"/>
    <property type="resolution" value="4.98 A"/>
    <property type="chains" value="B=1-689"/>
</dbReference>
<dbReference type="PDB" id="6WJV">
    <property type="method" value="EM"/>
    <property type="resolution" value="3.50 A"/>
    <property type="chains" value="2=1-689"/>
</dbReference>
<dbReference type="PDB" id="7PMK">
    <property type="method" value="EM"/>
    <property type="resolution" value="3.20 A"/>
    <property type="chains" value="R=1-689"/>
</dbReference>
<dbReference type="PDB" id="7PMN">
    <property type="method" value="EM"/>
    <property type="resolution" value="3.20 A"/>
    <property type="chains" value="R=1-689"/>
</dbReference>
<dbReference type="PDB" id="7QHS">
    <property type="method" value="EM"/>
    <property type="resolution" value="3.30 A"/>
    <property type="chains" value="F=1-689"/>
</dbReference>
<dbReference type="PDB" id="7Z13">
    <property type="method" value="EM"/>
    <property type="resolution" value="3.40 A"/>
    <property type="chains" value="F/M=1-689"/>
</dbReference>
<dbReference type="PDB" id="8KG6">
    <property type="method" value="EM"/>
    <property type="resolution" value="3.07 A"/>
    <property type="chains" value="N=1-689"/>
</dbReference>
<dbReference type="PDB" id="8KG8">
    <property type="method" value="EM"/>
    <property type="resolution" value="4.23 A"/>
    <property type="chains" value="N=1-689"/>
</dbReference>
<dbReference type="PDB" id="8KG9">
    <property type="method" value="EM"/>
    <property type="resolution" value="4.52 A"/>
    <property type="chains" value="N=1-689"/>
</dbReference>
<dbReference type="PDB" id="8P5E">
    <property type="method" value="EM"/>
    <property type="resolution" value="3.90 A"/>
    <property type="chains" value="F=1-689"/>
</dbReference>
<dbReference type="PDB" id="8P62">
    <property type="method" value="EM"/>
    <property type="resolution" value="3.90 A"/>
    <property type="chains" value="F=1-689"/>
</dbReference>
<dbReference type="PDB" id="8P63">
    <property type="method" value="EM"/>
    <property type="resolution" value="3.70 A"/>
    <property type="chains" value="F=1-689"/>
</dbReference>
<dbReference type="PDB" id="8W7M">
    <property type="method" value="EM"/>
    <property type="resolution" value="4.12 A"/>
    <property type="chains" value="N=1-689"/>
</dbReference>
<dbReference type="PDB" id="8W7S">
    <property type="method" value="EM"/>
    <property type="resolution" value="7.39 A"/>
    <property type="chains" value="N=1-689"/>
</dbReference>
<dbReference type="PDB" id="8XGC">
    <property type="method" value="EM"/>
    <property type="resolution" value="3.70 A"/>
    <property type="chains" value="9=1-689"/>
</dbReference>
<dbReference type="PDBsum" id="6HV8"/>
<dbReference type="PDBsum" id="6HV9"/>
<dbReference type="PDBsum" id="6WJV"/>
<dbReference type="PDBsum" id="7PMK"/>
<dbReference type="PDBsum" id="7PMN"/>
<dbReference type="PDBsum" id="7QHS"/>
<dbReference type="PDBsum" id="7Z13"/>
<dbReference type="PDBsum" id="8KG6"/>
<dbReference type="PDBsum" id="8KG8"/>
<dbReference type="PDBsum" id="8KG9"/>
<dbReference type="PDBsum" id="8P5E"/>
<dbReference type="PDBsum" id="8P62"/>
<dbReference type="PDBsum" id="8P63"/>
<dbReference type="PDBsum" id="8W7M"/>
<dbReference type="PDBsum" id="8W7S"/>
<dbReference type="PDBsum" id="8XGC"/>
<dbReference type="EMDB" id="EMD-0287"/>
<dbReference type="EMDB" id="EMD-0288"/>
<dbReference type="EMDB" id="EMD-13537"/>
<dbReference type="EMDB" id="EMD-13539"/>
<dbReference type="EMDB" id="EMD-13978"/>
<dbReference type="EMDB" id="EMD-14439"/>
<dbReference type="EMDB" id="EMD-17449"/>
<dbReference type="EMDB" id="EMD-17458"/>
<dbReference type="EMDB" id="EMD-17459"/>
<dbReference type="EMDB" id="EMD-21701"/>
<dbReference type="EMDB" id="EMD-37211"/>
<dbReference type="EMDB" id="EMD-37213"/>
<dbReference type="EMDB" id="EMD-37215"/>
<dbReference type="EMDB" id="EMD-37343"/>
<dbReference type="EMDB" id="EMD-37345"/>
<dbReference type="EMDB" id="EMD-38317"/>
<dbReference type="SMR" id="P24482"/>
<dbReference type="BioGRID" id="36348">
    <property type="interactions" value="85"/>
</dbReference>
<dbReference type="ComplexPortal" id="CPX-2110">
    <property type="entry name" value="DNA polymerase epsilon complex"/>
</dbReference>
<dbReference type="DIP" id="DIP-2533N"/>
<dbReference type="FunCoup" id="P24482">
    <property type="interactions" value="916"/>
</dbReference>
<dbReference type="IntAct" id="P24482">
    <property type="interactions" value="25"/>
</dbReference>
<dbReference type="MINT" id="P24482"/>
<dbReference type="STRING" id="4932.YPR175W"/>
<dbReference type="iPTMnet" id="P24482"/>
<dbReference type="PaxDb" id="4932-YPR175W"/>
<dbReference type="PeptideAtlas" id="P24482"/>
<dbReference type="EnsemblFungi" id="YPR175W_mRNA">
    <property type="protein sequence ID" value="YPR175W"/>
    <property type="gene ID" value="YPR175W"/>
</dbReference>
<dbReference type="GeneID" id="856305"/>
<dbReference type="KEGG" id="sce:YPR175W"/>
<dbReference type="AGR" id="SGD:S000006379"/>
<dbReference type="SGD" id="S000006379">
    <property type="gene designation" value="DPB2"/>
</dbReference>
<dbReference type="VEuPathDB" id="FungiDB:YPR175W"/>
<dbReference type="eggNOG" id="KOG3818">
    <property type="taxonomic scope" value="Eukaryota"/>
</dbReference>
<dbReference type="GeneTree" id="ENSGT00390000012435"/>
<dbReference type="HOGENOM" id="CLU_010628_1_0_1"/>
<dbReference type="InParanoid" id="P24482"/>
<dbReference type="OMA" id="PEDGAWF"/>
<dbReference type="OrthoDB" id="10254730at2759"/>
<dbReference type="BioCyc" id="YEAST:G3O-34302-MONOMER"/>
<dbReference type="Reactome" id="R-SCE-5656169">
    <property type="pathway name" value="Termination of translesion DNA synthesis"/>
</dbReference>
<dbReference type="Reactome" id="R-SCE-6782135">
    <property type="pathway name" value="Dual incision in TC-NER"/>
</dbReference>
<dbReference type="Reactome" id="R-SCE-68952">
    <property type="pathway name" value="DNA replication initiation"/>
</dbReference>
<dbReference type="Reactome" id="R-SCE-68962">
    <property type="pathway name" value="Activation of the pre-replicative complex"/>
</dbReference>
<dbReference type="BioGRID-ORCS" id="856305">
    <property type="hits" value="7 hits in 10 CRISPR screens"/>
</dbReference>
<dbReference type="PRO" id="PR:P24482"/>
<dbReference type="Proteomes" id="UP000002311">
    <property type="component" value="Chromosome XVI"/>
</dbReference>
<dbReference type="RNAct" id="P24482">
    <property type="molecule type" value="protein"/>
</dbReference>
<dbReference type="GO" id="GO:0005737">
    <property type="term" value="C:cytoplasm"/>
    <property type="evidence" value="ECO:0000314"/>
    <property type="project" value="SGD"/>
</dbReference>
<dbReference type="GO" id="GO:0008622">
    <property type="term" value="C:epsilon DNA polymerase complex"/>
    <property type="evidence" value="ECO:0000314"/>
    <property type="project" value="SGD"/>
</dbReference>
<dbReference type="GO" id="GO:0043596">
    <property type="term" value="C:nuclear replication fork"/>
    <property type="evidence" value="ECO:0000314"/>
    <property type="project" value="ComplexPortal"/>
</dbReference>
<dbReference type="GO" id="GO:0005634">
    <property type="term" value="C:nucleus"/>
    <property type="evidence" value="ECO:0000314"/>
    <property type="project" value="SGD"/>
</dbReference>
<dbReference type="GO" id="GO:0003677">
    <property type="term" value="F:DNA binding"/>
    <property type="evidence" value="ECO:0007669"/>
    <property type="project" value="UniProtKB-KW"/>
</dbReference>
<dbReference type="GO" id="GO:0006261">
    <property type="term" value="P:DNA-templated DNA replication"/>
    <property type="evidence" value="ECO:0000314"/>
    <property type="project" value="SGD"/>
</dbReference>
<dbReference type="GO" id="GO:0045005">
    <property type="term" value="P:DNA-templated DNA replication maintenance of fidelity"/>
    <property type="evidence" value="ECO:0000315"/>
    <property type="project" value="SGD"/>
</dbReference>
<dbReference type="GO" id="GO:0042276">
    <property type="term" value="P:error-prone translesion synthesis"/>
    <property type="evidence" value="ECO:0000314"/>
    <property type="project" value="SGD"/>
</dbReference>
<dbReference type="InterPro" id="IPR007185">
    <property type="entry name" value="DNA_pol_a/d/e_bsu"/>
</dbReference>
<dbReference type="InterPro" id="IPR016266">
    <property type="entry name" value="POLE2"/>
</dbReference>
<dbReference type="PANTHER" id="PTHR12708:SF0">
    <property type="entry name" value="DNA POLYMERASE EPSILON SUBUNIT 2"/>
    <property type="match status" value="1"/>
</dbReference>
<dbReference type="PANTHER" id="PTHR12708">
    <property type="entry name" value="DNA POLYMERASE EPSILON SUBUNIT B"/>
    <property type="match status" value="1"/>
</dbReference>
<dbReference type="Pfam" id="PF04042">
    <property type="entry name" value="DNA_pol_E_B"/>
    <property type="match status" value="1"/>
</dbReference>
<reference key="1">
    <citation type="journal article" date="1991" name="Proc. Natl. Acad. Sci. U.S.A.">
        <title>DPB2, the gene encoding DNA polymerase II subunit B, is required for chromosome replication in Saccharomyces cerevisiae.</title>
        <authorList>
            <person name="Araki H."/>
            <person name="Hamatake R.K."/>
            <person name="Johnston L.H."/>
            <person name="Sugino A."/>
        </authorList>
    </citation>
    <scope>NUCLEOTIDE SEQUENCE [GENOMIC DNA]</scope>
    <source>
        <strain>YHA8</strain>
    </source>
</reference>
<reference key="2">
    <citation type="journal article" date="1997" name="Nature">
        <title>The nucleotide sequence of Saccharomyces cerevisiae chromosome XVI.</title>
        <authorList>
            <person name="Bussey H."/>
            <person name="Storms R.K."/>
            <person name="Ahmed A."/>
            <person name="Albermann K."/>
            <person name="Allen E."/>
            <person name="Ansorge W."/>
            <person name="Araujo R."/>
            <person name="Aparicio A."/>
            <person name="Barrell B.G."/>
            <person name="Badcock K."/>
            <person name="Benes V."/>
            <person name="Botstein D."/>
            <person name="Bowman S."/>
            <person name="Brueckner M."/>
            <person name="Carpenter J."/>
            <person name="Cherry J.M."/>
            <person name="Chung E."/>
            <person name="Churcher C.M."/>
            <person name="Coster F."/>
            <person name="Davis K."/>
            <person name="Davis R.W."/>
            <person name="Dietrich F.S."/>
            <person name="Delius H."/>
            <person name="DiPaolo T."/>
            <person name="Dubois E."/>
            <person name="Duesterhoeft A."/>
            <person name="Duncan M."/>
            <person name="Floeth M."/>
            <person name="Fortin N."/>
            <person name="Friesen J.D."/>
            <person name="Fritz C."/>
            <person name="Goffeau A."/>
            <person name="Hall J."/>
            <person name="Hebling U."/>
            <person name="Heumann K."/>
            <person name="Hilbert H."/>
            <person name="Hillier L.W."/>
            <person name="Hunicke-Smith S."/>
            <person name="Hyman R.W."/>
            <person name="Johnston M."/>
            <person name="Kalman S."/>
            <person name="Kleine K."/>
            <person name="Komp C."/>
            <person name="Kurdi O."/>
            <person name="Lashkari D."/>
            <person name="Lew H."/>
            <person name="Lin A."/>
            <person name="Lin D."/>
            <person name="Louis E.J."/>
            <person name="Marathe R."/>
            <person name="Messenguy F."/>
            <person name="Mewes H.-W."/>
            <person name="Mirtipati S."/>
            <person name="Moestl D."/>
            <person name="Mueller-Auer S."/>
            <person name="Namath A."/>
            <person name="Nentwich U."/>
            <person name="Oefner P."/>
            <person name="Pearson D."/>
            <person name="Petel F.X."/>
            <person name="Pohl T.M."/>
            <person name="Purnelle B."/>
            <person name="Rajandream M.A."/>
            <person name="Rechmann S."/>
            <person name="Rieger M."/>
            <person name="Riles L."/>
            <person name="Roberts D."/>
            <person name="Schaefer M."/>
            <person name="Scharfe M."/>
            <person name="Scherens B."/>
            <person name="Schramm S."/>
            <person name="Schroeder M."/>
            <person name="Sdicu A.-M."/>
            <person name="Tettelin H."/>
            <person name="Urrestarazu L.A."/>
            <person name="Ushinsky S."/>
            <person name="Vierendeels F."/>
            <person name="Vissers S."/>
            <person name="Voss H."/>
            <person name="Walsh S.V."/>
            <person name="Wambutt R."/>
            <person name="Wang Y."/>
            <person name="Wedler E."/>
            <person name="Wedler H."/>
            <person name="Winnett E."/>
            <person name="Zhong W.-W."/>
            <person name="Zollner A."/>
            <person name="Vo D.H."/>
            <person name="Hani J."/>
        </authorList>
    </citation>
    <scope>NUCLEOTIDE SEQUENCE [LARGE SCALE GENOMIC DNA]</scope>
    <source>
        <strain>ATCC 204508 / S288c</strain>
    </source>
</reference>
<reference key="3">
    <citation type="journal article" date="2014" name="G3 (Bethesda)">
        <title>The reference genome sequence of Saccharomyces cerevisiae: Then and now.</title>
        <authorList>
            <person name="Engel S.R."/>
            <person name="Dietrich F.S."/>
            <person name="Fisk D.G."/>
            <person name="Binkley G."/>
            <person name="Balakrishnan R."/>
            <person name="Costanzo M.C."/>
            <person name="Dwight S.S."/>
            <person name="Hitz B.C."/>
            <person name="Karra K."/>
            <person name="Nash R.S."/>
            <person name="Weng S."/>
            <person name="Wong E.D."/>
            <person name="Lloyd P."/>
            <person name="Skrzypek M.S."/>
            <person name="Miyasato S.R."/>
            <person name="Simison M."/>
            <person name="Cherry J.M."/>
        </authorList>
    </citation>
    <scope>GENOME REANNOTATION</scope>
    <source>
        <strain>ATCC 204508 / S288c</strain>
    </source>
</reference>
<reference key="4">
    <citation type="journal article" date="2004" name="J. Biol. Chem.">
        <title>Cell cycle-dependent phosphorylation of the DNA polymerase epsilon subunit, Dpb2, by the Cdc28 cyclin-dependent protein kinase.</title>
        <authorList>
            <person name="Kesti T."/>
            <person name="McDonald W.H."/>
            <person name="Yates J.R. III"/>
            <person name="Wittenberg C."/>
        </authorList>
    </citation>
    <scope>PROTEIN SEQUENCE OF 132-144 AND 606-622</scope>
    <scope>PHOSPHORYLATION AT SER-141 AND SER-613</scope>
    <scope>IDENTIFICATION BY MASS SPECTROMETRY</scope>
</reference>
<reference key="5">
    <citation type="journal article" date="2000" name="Nucleic Acids Res.">
        <title>Structure and function of the fourth subunit (Dpb4p) of DNA polymerase epsilon in Saccharomyces cerevisiae.</title>
        <authorList>
            <person name="Ohya T."/>
            <person name="Maki S."/>
            <person name="Kawasaki Y."/>
            <person name="Sugino A."/>
        </authorList>
    </citation>
    <scope>SUBUNIT</scope>
</reference>
<reference key="6">
    <citation type="journal article" date="2002" name="J. Biol. Chem.">
        <title>Fidelity of DNA polymerase epsilon holoenzyme from budding yeast Saccharomyces cerevisiae.</title>
        <authorList>
            <person name="Shimizu K."/>
            <person name="Hashimoto K."/>
            <person name="Kirchner J.M."/>
            <person name="Nakai W."/>
            <person name="Nishikawa H."/>
            <person name="Resnick M.A."/>
            <person name="Sugino A."/>
        </authorList>
    </citation>
    <scope>FUNCTION</scope>
</reference>
<reference key="7">
    <citation type="journal article" date="2003" name="J. Biol. Chem.">
        <title>The quaternary structure of DNA polymerase epsilon from Saccharomyces cerevisiae.</title>
        <authorList>
            <person name="Chilkova O."/>
            <person name="Jonsson B.-H."/>
            <person name="Johansson E."/>
        </authorList>
    </citation>
    <scope>COMPOSITION OF THE DNA POLYMERASE EPSILON COMPLEX</scope>
</reference>
<reference key="8">
    <citation type="journal article" date="2003" name="Nature">
        <title>Sequencing and comparison of yeast species to identify genes and regulatory elements.</title>
        <authorList>
            <person name="Kellis M."/>
            <person name="Patterson N."/>
            <person name="Endrizzi M."/>
            <person name="Birren B.W."/>
            <person name="Lander E.S."/>
        </authorList>
    </citation>
    <scope>IDENTIFICATION OF PROBABLE INITIATION SITE</scope>
</reference>
<reference key="9">
    <citation type="journal article" date="2003" name="Nature">
        <title>Global analysis of protein localization in budding yeast.</title>
        <authorList>
            <person name="Huh W.-K."/>
            <person name="Falvo J.V."/>
            <person name="Gerke L.C."/>
            <person name="Carroll A.S."/>
            <person name="Howson R.W."/>
            <person name="Weissman J.S."/>
            <person name="O'Shea E.K."/>
        </authorList>
    </citation>
    <scope>SUBCELLULAR LOCATION [LARGE SCALE ANALYSIS]</scope>
</reference>
<reference key="10">
    <citation type="journal article" date="2003" name="Nature">
        <title>Global analysis of protein expression in yeast.</title>
        <authorList>
            <person name="Ghaemmaghami S."/>
            <person name="Huh W.-K."/>
            <person name="Bower K."/>
            <person name="Howson R.W."/>
            <person name="Belle A."/>
            <person name="Dephoure N."/>
            <person name="O'Shea E.K."/>
            <person name="Weissman J.S."/>
        </authorList>
    </citation>
    <scope>LEVEL OF PROTEIN EXPRESSION [LARGE SCALE ANALYSIS]</scope>
</reference>
<reference key="11">
    <citation type="journal article" date="2009" name="Science">
        <title>Global analysis of Cdk1 substrate phosphorylation sites provides insights into evolution.</title>
        <authorList>
            <person name="Holt L.J."/>
            <person name="Tuch B.B."/>
            <person name="Villen J."/>
            <person name="Johnson A.D."/>
            <person name="Gygi S.P."/>
            <person name="Morgan D.O."/>
        </authorList>
    </citation>
    <scope>PHOSPHORYLATION [LARGE SCALE ANALYSIS] AT SER-122</scope>
    <scope>IDENTIFICATION BY MASS SPECTROMETRY [LARGE SCALE ANALYSIS]</scope>
</reference>
<comment type="function">
    <text evidence="3">As accessory component of the DNA polymerase epsilon complex participates in chromosomal DNA replication. It is required during synthesis of the leading and lagging DNA strands at the replication fork and binds at/or near replication origins and moves along DNA with the replication fork. It has 3'-5' proofreading exonuclease activity that correct errors arising during DNA replication. It is also involved in DNA synthesis during DNA repair.</text>
</comment>
<comment type="subunit">
    <text evidence="2">DNA polymerase epsilon is a heterotetramer consisting of POL2, DPB2, DPB3 and DPB4.</text>
</comment>
<comment type="interaction">
    <interactant intactId="EBI-6071">
        <id>P24482</id>
    </interactant>
    <interactant intactId="EBI-6140">
        <id>P21951</id>
        <label>POL2</label>
    </interactant>
    <organismsDiffer>false</organismsDiffer>
    <experiments>8</experiments>
</comment>
<comment type="subcellular location">
    <subcellularLocation>
        <location evidence="4">Cytoplasm</location>
    </subcellularLocation>
    <subcellularLocation>
        <location evidence="4">Nucleus</location>
    </subcellularLocation>
</comment>
<comment type="PTM">
    <text evidence="6">Phosphorylated in a cell cycle dependent manner during late G1 phase. Phosphorylation may facilitate the interaction with POL2 or the activity of DNA polymerase II. Phosphorylation is independent of DNA replication but dependent upon CDC28 in vivo. Both Ser-141 and Ser-613 are phosphorylated in vivo, but in vitro only Ser-141 is phosphorylated by CDC28.</text>
</comment>
<comment type="miscellaneous">
    <text evidence="5">Present with 3110 +/- 251 molecules/cell in log phase SD medium.</text>
</comment>
<comment type="miscellaneous">
    <text>In eukaryotes there are five DNA polymerases: alpha, beta, gamma, delta, and epsilon which are responsible for different reactions of DNA synthesis.</text>
</comment>
<comment type="similarity">
    <text evidence="7">Belongs to the DNA polymerase epsilon subunit B family.</text>
</comment>
<comment type="sequence caution" evidence="7">
    <conflict type="erroneous initiation">
        <sequence resource="EMBL-CDS" id="AAA34576"/>
    </conflict>
</comment>
<comment type="sequence caution" evidence="7">
    <conflict type="erroneous initiation">
        <sequence resource="EMBL-CDS" id="AAB68109"/>
    </conflict>
</comment>
<protein>
    <recommendedName>
        <fullName>DNA polymerase epsilon subunit B</fullName>
    </recommendedName>
    <alternativeName>
        <fullName>DNA polymerase II subunit 2</fullName>
    </alternativeName>
</protein>
<accession>P24482</accession>
<accession>D6W4H6</accession>
<accession>Q06622</accession>
<keyword id="KW-0002">3D-structure</keyword>
<keyword id="KW-0131">Cell cycle</keyword>
<keyword id="KW-0963">Cytoplasm</keyword>
<keyword id="KW-0903">Direct protein sequencing</keyword>
<keyword id="KW-0235">DNA replication</keyword>
<keyword id="KW-0238">DNA-binding</keyword>
<keyword id="KW-0539">Nucleus</keyword>
<keyword id="KW-0597">Phosphoprotein</keyword>
<keyword id="KW-1185">Reference proteome</keyword>
<feature type="chain" id="PRO_0000071573" description="DNA polymerase epsilon subunit B">
    <location>
        <begin position="1"/>
        <end position="689"/>
    </location>
</feature>
<feature type="region of interest" description="Disordered" evidence="1">
    <location>
        <begin position="98"/>
        <end position="155"/>
    </location>
</feature>
<feature type="compositionally biased region" description="Basic and acidic residues" evidence="1">
    <location>
        <begin position="98"/>
        <end position="115"/>
    </location>
</feature>
<feature type="compositionally biased region" description="Acidic residues" evidence="1">
    <location>
        <begin position="116"/>
        <end position="126"/>
    </location>
</feature>
<feature type="compositionally biased region" description="Polar residues" evidence="1">
    <location>
        <begin position="132"/>
        <end position="144"/>
    </location>
</feature>
<feature type="compositionally biased region" description="Basic and acidic residues" evidence="1">
    <location>
        <begin position="146"/>
        <end position="155"/>
    </location>
</feature>
<feature type="modified residue" description="Phosphoserine" evidence="8">
    <location>
        <position position="122"/>
    </location>
</feature>
<feature type="modified residue" description="Phosphoserine; by CDC28" evidence="6">
    <location>
        <position position="141"/>
    </location>
</feature>
<feature type="modified residue" description="Phosphoserine" evidence="6">
    <location>
        <position position="613"/>
    </location>
</feature>
<feature type="sequence conflict" description="In Ref. 1; AAA34576." evidence="7" ref="1">
    <original>F</original>
    <variation>Y</variation>
    <location>
        <position position="458"/>
    </location>
</feature>
<feature type="sequence conflict" description="In Ref. 1; AAA34576." evidence="7" ref="1">
    <original>K</original>
    <variation>R</variation>
    <location>
        <position position="521"/>
    </location>
</feature>
<feature type="sequence conflict" description="In Ref. 1; AAA34576." evidence="7" ref="1">
    <original>V</original>
    <variation>F</variation>
    <location>
        <position position="565"/>
    </location>
</feature>
<feature type="sequence conflict" description="In Ref. 1; AAA34576." evidence="7" ref="1">
    <original>E</original>
    <variation>Q</variation>
    <location>
        <position position="584"/>
    </location>
</feature>
<feature type="sequence conflict" description="In Ref. 1; AAA34576." evidence="7" ref="1">
    <original>T</original>
    <variation>I</variation>
    <location>
        <position position="644"/>
    </location>
</feature>
<feature type="helix" evidence="10">
    <location>
        <begin position="14"/>
        <end position="29"/>
    </location>
</feature>
<feature type="strand" evidence="10">
    <location>
        <begin position="32"/>
        <end position="34"/>
    </location>
</feature>
<feature type="helix" evidence="10">
    <location>
        <begin position="35"/>
        <end position="49"/>
    </location>
</feature>
<feature type="helix" evidence="10">
    <location>
        <begin position="58"/>
        <end position="73"/>
    </location>
</feature>
<feature type="helix" evidence="10">
    <location>
        <begin position="81"/>
        <end position="92"/>
    </location>
</feature>
<feature type="helix" evidence="10">
    <location>
        <begin position="166"/>
        <end position="168"/>
    </location>
</feature>
<feature type="strand" evidence="10">
    <location>
        <begin position="171"/>
        <end position="173"/>
    </location>
</feature>
<feature type="strand" evidence="9">
    <location>
        <begin position="175"/>
        <end position="178"/>
    </location>
</feature>
<feature type="strand" evidence="10">
    <location>
        <begin position="180"/>
        <end position="184"/>
    </location>
</feature>
<feature type="turn" evidence="10">
    <location>
        <begin position="185"/>
        <end position="188"/>
    </location>
</feature>
<feature type="strand" evidence="10">
    <location>
        <begin position="189"/>
        <end position="193"/>
    </location>
</feature>
<feature type="turn" evidence="10">
    <location>
        <begin position="196"/>
        <end position="199"/>
    </location>
</feature>
<feature type="turn" evidence="10">
    <location>
        <begin position="201"/>
        <end position="205"/>
    </location>
</feature>
<feature type="helix" evidence="10">
    <location>
        <begin position="211"/>
        <end position="231"/>
    </location>
</feature>
<feature type="turn" evidence="10">
    <location>
        <begin position="233"/>
        <end position="235"/>
    </location>
</feature>
<feature type="helix" evidence="10">
    <location>
        <begin position="271"/>
        <end position="274"/>
    </location>
</feature>
<feature type="strand" evidence="10">
    <location>
        <begin position="279"/>
        <end position="290"/>
    </location>
</feature>
<feature type="strand" evidence="10">
    <location>
        <begin position="296"/>
        <end position="300"/>
    </location>
</feature>
<feature type="strand" evidence="10">
    <location>
        <begin position="303"/>
        <end position="308"/>
    </location>
</feature>
<feature type="strand" evidence="9">
    <location>
        <begin position="309"/>
        <end position="311"/>
    </location>
</feature>
<feature type="strand" evidence="10">
    <location>
        <begin position="325"/>
        <end position="333"/>
    </location>
</feature>
<feature type="turn" evidence="10">
    <location>
        <begin position="334"/>
        <end position="337"/>
    </location>
</feature>
<feature type="strand" evidence="10">
    <location>
        <begin position="338"/>
        <end position="345"/>
    </location>
</feature>
<feature type="helix" evidence="10">
    <location>
        <begin position="352"/>
        <end position="359"/>
    </location>
</feature>
<feature type="strand" evidence="10">
    <location>
        <begin position="364"/>
        <end position="368"/>
    </location>
</feature>
<feature type="helix" evidence="10">
    <location>
        <begin position="381"/>
        <end position="393"/>
    </location>
</feature>
<feature type="strand" evidence="10">
    <location>
        <begin position="399"/>
        <end position="402"/>
    </location>
</feature>
<feature type="strand" evidence="9">
    <location>
        <begin position="408"/>
        <end position="410"/>
    </location>
</feature>
<feature type="helix" evidence="10">
    <location>
        <begin position="411"/>
        <end position="424"/>
    </location>
</feature>
<feature type="strand" evidence="10">
    <location>
        <begin position="430"/>
        <end position="436"/>
    </location>
</feature>
<feature type="strand" evidence="10">
    <location>
        <begin position="438"/>
        <end position="441"/>
    </location>
</feature>
<feature type="strand" evidence="10">
    <location>
        <begin position="449"/>
        <end position="451"/>
    </location>
</feature>
<feature type="helix" evidence="10">
    <location>
        <begin position="454"/>
        <end position="470"/>
    </location>
</feature>
<feature type="helix" evidence="10">
    <location>
        <begin position="473"/>
        <end position="478"/>
    </location>
</feature>
<feature type="strand" evidence="10">
    <location>
        <begin position="481"/>
        <end position="484"/>
    </location>
</feature>
<feature type="helix" evidence="10">
    <location>
        <begin position="490"/>
        <end position="496"/>
    </location>
</feature>
<feature type="strand" evidence="10">
    <location>
        <begin position="502"/>
        <end position="504"/>
    </location>
</feature>
<feature type="turn" evidence="9">
    <location>
        <begin position="510"/>
        <end position="512"/>
    </location>
</feature>
<feature type="helix" evidence="10">
    <location>
        <begin position="514"/>
        <end position="519"/>
    </location>
</feature>
<feature type="strand" evidence="10">
    <location>
        <begin position="521"/>
        <end position="525"/>
    </location>
</feature>
<feature type="strand" evidence="10">
    <location>
        <begin position="531"/>
        <end position="533"/>
    </location>
</feature>
<feature type="strand" evidence="10">
    <location>
        <begin position="538"/>
        <end position="543"/>
    </location>
</feature>
<feature type="helix" evidence="10">
    <location>
        <begin position="546"/>
        <end position="553"/>
    </location>
</feature>
<feature type="helix" evidence="10">
    <location>
        <begin position="594"/>
        <end position="609"/>
    </location>
</feature>
<feature type="strand" evidence="9">
    <location>
        <begin position="611"/>
        <end position="613"/>
    </location>
</feature>
<feature type="turn" evidence="10">
    <location>
        <begin position="617"/>
        <end position="619"/>
    </location>
</feature>
<feature type="helix" evidence="10">
    <location>
        <begin position="624"/>
        <end position="629"/>
    </location>
</feature>
<feature type="strand" evidence="10">
    <location>
        <begin position="637"/>
        <end position="642"/>
    </location>
</feature>
<feature type="strand" evidence="9">
    <location>
        <begin position="644"/>
        <end position="646"/>
    </location>
</feature>
<feature type="strand" evidence="9">
    <location>
        <begin position="653"/>
        <end position="655"/>
    </location>
</feature>
<feature type="strand" evidence="10">
    <location>
        <begin position="656"/>
        <end position="660"/>
    </location>
</feature>
<feature type="strand" evidence="10">
    <location>
        <begin position="664"/>
        <end position="666"/>
    </location>
</feature>
<feature type="strand" evidence="10">
    <location>
        <begin position="669"/>
        <end position="675"/>
    </location>
</feature>
<feature type="turn" evidence="10">
    <location>
        <begin position="677"/>
        <end position="679"/>
    </location>
</feature>
<feature type="strand" evidence="10">
    <location>
        <begin position="682"/>
        <end position="688"/>
    </location>
</feature>
<sequence>MFGSGNVLPVKIQPPLLRPLAYRVLSRKYGLSIKSDGLSALAEFVGTNIGANWRQGPATIKFLEQFAAVWKQQERGLFIDQSGVKEVIQEMKEREKVEWSHEHPIQHEENILGRTDDDENNSDDEMPIAADSSLQNVSLSSPMRQPTERDEYKQPFKPESSKALDWRDYFKVINASQQQRFSYNPHKMQFIFVPNKKQNGLGGIAGFLPDIEDKVQMFLTRYYLTNDRVMRNENFQNSDMFNPLSSMVSLQNELSNTNRQQQSSSMSITPIKNLLGRDAQNFLLLGLLNKNFKGNWSLEDPSGSVEIDISQTIPTQGHYYVPGCMVLVEGIYYSVGNKFHVTSMTLPPGERREITLETIGNLDLLGIHGISNNNFIARLDKDLKIRLHLLEKELTDHKFVILGANLFLDDLKIMTALSKILQKLNDDPPTLLIWQGSFTSVPVFASMSSRNISSSTQFKNNFDALATLLSRFDNLTENTTMIFIPGPNDLWGSMVSLGASGTLPQDPIPSAFTKKINKVCKNVVWSSNPTRIAYLSQEIVIFRDDLSGRFKRHRLEFPFNESEDVYTENDNMMSKDTDIVPIDELVKEPDQLPQKVQETRKLVKTILDQGHLSPFLDSLRPISWDLDHTLTLCPIPSTMVLCDTTSAQFDLTYNGCKVINPGSFIHNRRARYMEYVPSSKKTIQEEIYI</sequence>
<gene>
    <name type="primary">DPB2</name>
    <name type="ordered locus">YPR175W</name>
    <name type="ORF">P9705.7</name>
</gene>
<organism>
    <name type="scientific">Saccharomyces cerevisiae (strain ATCC 204508 / S288c)</name>
    <name type="common">Baker's yeast</name>
    <dbReference type="NCBI Taxonomy" id="559292"/>
    <lineage>
        <taxon>Eukaryota</taxon>
        <taxon>Fungi</taxon>
        <taxon>Dikarya</taxon>
        <taxon>Ascomycota</taxon>
        <taxon>Saccharomycotina</taxon>
        <taxon>Saccharomycetes</taxon>
        <taxon>Saccharomycetales</taxon>
        <taxon>Saccharomycetaceae</taxon>
        <taxon>Saccharomyces</taxon>
    </lineage>
</organism>
<proteinExistence type="evidence at protein level"/>